<dbReference type="EC" id="3.2.1.14"/>
<dbReference type="EMBL" id="X59995">
    <property type="protein sequence ID" value="CAA42612.1"/>
    <property type="molecule type" value="Genomic_DNA"/>
</dbReference>
<dbReference type="EMBL" id="CM009298">
    <property type="status" value="NOT_ANNOTATED_CDS"/>
    <property type="molecule type" value="Genomic_DNA"/>
</dbReference>
<dbReference type="SMR" id="P29031"/>
<dbReference type="CAZy" id="CBM18">
    <property type="family name" value="Carbohydrate-Binding Module Family 18"/>
</dbReference>
<dbReference type="CAZy" id="GH19">
    <property type="family name" value="Glycoside Hydrolase Family 19"/>
</dbReference>
<dbReference type="InParanoid" id="P29031"/>
<dbReference type="Proteomes" id="UP000006729">
    <property type="component" value="Chromosome 9"/>
</dbReference>
<dbReference type="GO" id="GO:0008061">
    <property type="term" value="F:chitin binding"/>
    <property type="evidence" value="ECO:0007669"/>
    <property type="project" value="UniProtKB-KW"/>
</dbReference>
<dbReference type="GO" id="GO:0004568">
    <property type="term" value="F:chitinase activity"/>
    <property type="evidence" value="ECO:0000318"/>
    <property type="project" value="GO_Central"/>
</dbReference>
<dbReference type="GO" id="GO:0008843">
    <property type="term" value="F:endochitinase activity"/>
    <property type="evidence" value="ECO:0007669"/>
    <property type="project" value="UniProtKB-EC"/>
</dbReference>
<dbReference type="GO" id="GO:0016998">
    <property type="term" value="P:cell wall macromolecule catabolic process"/>
    <property type="evidence" value="ECO:0007669"/>
    <property type="project" value="InterPro"/>
</dbReference>
<dbReference type="GO" id="GO:0006032">
    <property type="term" value="P:chitin catabolic process"/>
    <property type="evidence" value="ECO:0007669"/>
    <property type="project" value="UniProtKB-KW"/>
</dbReference>
<dbReference type="GO" id="GO:0050832">
    <property type="term" value="P:defense response to fungus"/>
    <property type="evidence" value="ECO:0000318"/>
    <property type="project" value="GO_Central"/>
</dbReference>
<dbReference type="GO" id="GO:0000272">
    <property type="term" value="P:polysaccharide catabolic process"/>
    <property type="evidence" value="ECO:0007669"/>
    <property type="project" value="UniProtKB-KW"/>
</dbReference>
<dbReference type="CDD" id="cd00325">
    <property type="entry name" value="chitinase_GH19"/>
    <property type="match status" value="1"/>
</dbReference>
<dbReference type="CDD" id="cd06921">
    <property type="entry name" value="ChtBD1_GH19_hevein"/>
    <property type="match status" value="1"/>
</dbReference>
<dbReference type="FunFam" id="1.10.530.10:FF:000067">
    <property type="entry name" value="Acidic endochitinase WIN6.2B"/>
    <property type="match status" value="1"/>
</dbReference>
<dbReference type="FunFam" id="1.10.530.10:FF:000068">
    <property type="entry name" value="Acidic endochitinase WIN6.2B"/>
    <property type="match status" value="1"/>
</dbReference>
<dbReference type="FunFam" id="3.30.60.10:FF:000001">
    <property type="entry name" value="Basic endochitinase"/>
    <property type="match status" value="1"/>
</dbReference>
<dbReference type="Gene3D" id="1.10.530.10">
    <property type="match status" value="2"/>
</dbReference>
<dbReference type="Gene3D" id="3.30.20.10">
    <property type="entry name" value="Endochitinase, domain 2"/>
    <property type="match status" value="1"/>
</dbReference>
<dbReference type="Gene3D" id="3.30.60.10">
    <property type="entry name" value="Endochitinase-like"/>
    <property type="match status" value="1"/>
</dbReference>
<dbReference type="InterPro" id="IPR001002">
    <property type="entry name" value="Chitin-bd_1"/>
</dbReference>
<dbReference type="InterPro" id="IPR018371">
    <property type="entry name" value="Chitin-binding_1_CS"/>
</dbReference>
<dbReference type="InterPro" id="IPR036861">
    <property type="entry name" value="Endochitinase-like_sf"/>
</dbReference>
<dbReference type="InterPro" id="IPR016283">
    <property type="entry name" value="Glyco_hydro_19"/>
</dbReference>
<dbReference type="InterPro" id="IPR000726">
    <property type="entry name" value="Glyco_hydro_19_cat"/>
</dbReference>
<dbReference type="InterPro" id="IPR023346">
    <property type="entry name" value="Lysozyme-like_dom_sf"/>
</dbReference>
<dbReference type="PANTHER" id="PTHR22595:SF79">
    <property type="entry name" value="CHITINASE 12"/>
    <property type="match status" value="1"/>
</dbReference>
<dbReference type="PANTHER" id="PTHR22595">
    <property type="entry name" value="CHITINASE-RELATED"/>
    <property type="match status" value="1"/>
</dbReference>
<dbReference type="Pfam" id="PF00187">
    <property type="entry name" value="Chitin_bind_1"/>
    <property type="match status" value="1"/>
</dbReference>
<dbReference type="Pfam" id="PF00182">
    <property type="entry name" value="Glyco_hydro_19"/>
    <property type="match status" value="1"/>
</dbReference>
<dbReference type="PIRSF" id="PIRSF001060">
    <property type="entry name" value="Endochitinase"/>
    <property type="match status" value="1"/>
</dbReference>
<dbReference type="PRINTS" id="PR00451">
    <property type="entry name" value="CHITINBINDNG"/>
</dbReference>
<dbReference type="SMART" id="SM00270">
    <property type="entry name" value="ChtBD1"/>
    <property type="match status" value="1"/>
</dbReference>
<dbReference type="SUPFAM" id="SSF53955">
    <property type="entry name" value="Lysozyme-like"/>
    <property type="match status" value="1"/>
</dbReference>
<dbReference type="SUPFAM" id="SSF57016">
    <property type="entry name" value="Plant lectins/antimicrobial peptides"/>
    <property type="match status" value="1"/>
</dbReference>
<dbReference type="PROSITE" id="PS00026">
    <property type="entry name" value="CHIT_BIND_I_1"/>
    <property type="match status" value="1"/>
</dbReference>
<dbReference type="PROSITE" id="PS50941">
    <property type="entry name" value="CHIT_BIND_I_2"/>
    <property type="match status" value="1"/>
</dbReference>
<dbReference type="PROSITE" id="PS00773">
    <property type="entry name" value="CHITINASE_19_1"/>
    <property type="match status" value="1"/>
</dbReference>
<dbReference type="PROSITE" id="PS00774">
    <property type="entry name" value="CHITINASE_19_2"/>
    <property type="match status" value="1"/>
</dbReference>
<organism>
    <name type="scientific">Populus trichocarpa</name>
    <name type="common">Western balsam poplar</name>
    <name type="synonym">Populus balsamifera subsp. trichocarpa</name>
    <dbReference type="NCBI Taxonomy" id="3694"/>
    <lineage>
        <taxon>Eukaryota</taxon>
        <taxon>Viridiplantae</taxon>
        <taxon>Streptophyta</taxon>
        <taxon>Embryophyta</taxon>
        <taxon>Tracheophyta</taxon>
        <taxon>Spermatophyta</taxon>
        <taxon>Magnoliopsida</taxon>
        <taxon>eudicotyledons</taxon>
        <taxon>Gunneridae</taxon>
        <taxon>Pentapetalae</taxon>
        <taxon>rosids</taxon>
        <taxon>fabids</taxon>
        <taxon>Malpighiales</taxon>
        <taxon>Salicaceae</taxon>
        <taxon>Saliceae</taxon>
        <taxon>Populus</taxon>
    </lineage>
</organism>
<proteinExistence type="evidence at transcript level"/>
<reference key="1">
    <citation type="journal article" date="1991" name="Plant Mol. Biol.">
        <title>Populus chitinase genes: structure, organization, and similarity of translated sequences to herbaceous plant chitinases.</title>
        <authorList>
            <person name="Davis J.M."/>
            <person name="Clarke H.R.G."/>
            <person name="Bradshaw H.D. Jr."/>
            <person name="Gordon M.P."/>
        </authorList>
    </citation>
    <scope>NUCLEOTIDE SEQUENCE [GENOMIC DNA]</scope>
</reference>
<reference key="2">
    <citation type="journal article" date="2006" name="Science">
        <title>The genome of black cottonwood, Populus trichocarpa (Torr. &amp; Gray).</title>
        <authorList>
            <person name="Tuskan G.A."/>
            <person name="Difazio S."/>
            <person name="Jansson S."/>
            <person name="Bohlmann J."/>
            <person name="Grigoriev I."/>
            <person name="Hellsten U."/>
            <person name="Putnam N."/>
            <person name="Ralph S."/>
            <person name="Rombauts S."/>
            <person name="Salamov A."/>
            <person name="Schein J."/>
            <person name="Sterck L."/>
            <person name="Aerts A."/>
            <person name="Bhalerao R.R."/>
            <person name="Bhalerao R.P."/>
            <person name="Blaudez D."/>
            <person name="Boerjan W."/>
            <person name="Brun A."/>
            <person name="Brunner A."/>
            <person name="Busov V."/>
            <person name="Campbell M."/>
            <person name="Carlson J."/>
            <person name="Chalot M."/>
            <person name="Chapman J."/>
            <person name="Chen G.-L."/>
            <person name="Cooper D."/>
            <person name="Coutinho P.M."/>
            <person name="Couturier J."/>
            <person name="Covert S."/>
            <person name="Cronk Q."/>
            <person name="Cunningham R."/>
            <person name="Davis J."/>
            <person name="Degroeve S."/>
            <person name="Dejardin A."/>
            <person name="dePamphilis C.W."/>
            <person name="Detter J."/>
            <person name="Dirks B."/>
            <person name="Dubchak I."/>
            <person name="Duplessis S."/>
            <person name="Ehlting J."/>
            <person name="Ellis B."/>
            <person name="Gendler K."/>
            <person name="Goodstein D."/>
            <person name="Gribskov M."/>
            <person name="Grimwood J."/>
            <person name="Groover A."/>
            <person name="Gunter L."/>
            <person name="Hamberger B."/>
            <person name="Heinze B."/>
            <person name="Helariutta Y."/>
            <person name="Henrissat B."/>
            <person name="Holligan D."/>
            <person name="Holt R."/>
            <person name="Huang W."/>
            <person name="Islam-Faridi N."/>
            <person name="Jones S."/>
            <person name="Jones-Rhoades M."/>
            <person name="Jorgensen R."/>
            <person name="Joshi C."/>
            <person name="Kangasjaervi J."/>
            <person name="Karlsson J."/>
            <person name="Kelleher C."/>
            <person name="Kirkpatrick R."/>
            <person name="Kirst M."/>
            <person name="Kohler A."/>
            <person name="Kalluri U."/>
            <person name="Larimer F."/>
            <person name="Leebens-Mack J."/>
            <person name="Leple J.-C."/>
            <person name="Locascio P."/>
            <person name="Lou Y."/>
            <person name="Lucas S."/>
            <person name="Martin F."/>
            <person name="Montanini B."/>
            <person name="Napoli C."/>
            <person name="Nelson D.R."/>
            <person name="Nelson C."/>
            <person name="Nieminen K."/>
            <person name="Nilsson O."/>
            <person name="Pereda V."/>
            <person name="Peter G."/>
            <person name="Philippe R."/>
            <person name="Pilate G."/>
            <person name="Poliakov A."/>
            <person name="Razumovskaya J."/>
            <person name="Richardson P."/>
            <person name="Rinaldi C."/>
            <person name="Ritland K."/>
            <person name="Rouze P."/>
            <person name="Ryaboy D."/>
            <person name="Schmutz J."/>
            <person name="Schrader J."/>
            <person name="Segerman B."/>
            <person name="Shin H."/>
            <person name="Siddiqui A."/>
            <person name="Sterky F."/>
            <person name="Terry A."/>
            <person name="Tsai C.-J."/>
            <person name="Uberbacher E."/>
            <person name="Unneberg P."/>
            <person name="Vahala J."/>
            <person name="Wall K."/>
            <person name="Wessler S."/>
            <person name="Yang G."/>
            <person name="Yin T."/>
            <person name="Douglas C."/>
            <person name="Marra M."/>
            <person name="Sandberg G."/>
            <person name="Van de Peer Y."/>
            <person name="Rokhsar D.S."/>
        </authorList>
    </citation>
    <scope>NUCLEOTIDE SEQUENCE [LARGE SCALE GENOMIC DNA]</scope>
    <source>
        <strain>cv. Nisqually</strain>
    </source>
</reference>
<accession>P29031</accession>
<comment type="function">
    <text>Defense against chitin-containing fungal pathogens.</text>
</comment>
<comment type="catalytic activity">
    <reaction>
        <text>Random endo-hydrolysis of N-acetyl-beta-D-glucosaminide (1-&gt;4)-beta-linkages in chitin and chitodextrins.</text>
        <dbReference type="EC" id="3.2.1.14"/>
    </reaction>
</comment>
<comment type="induction">
    <text>By wounding.</text>
</comment>
<comment type="similarity">
    <text evidence="4">Belongs to the glycosyl hydrolase 19 family. Chitinase class I subfamily.</text>
</comment>
<sequence>MSVWAFAFFSLFLSLSVRGSAEQCGQQAGDALCPGGLCCSSYGWCGTTADYCGDGCQSQCDGGGGGGGGGGGGGGGGGGGGDGYLSDIIPESMFDDMLKYRNDPQCPAVGFYTYNAFISAAKEFPDFGNTGDDLMRKREIAAFLGQTSHETNGWWPAAQGDQYDWGYCHMNYNYGLCGDDLNLPLLQEPELVETDPFIAFKTALWFWMTPQSPKPSCHAVITESWTPSAADSEAGRVPGYGVITNIINGGIECGQGGPNNANENRIGFYKTYCDSLGTTYGSNLDCYQQRPFGYGLLGLKDTM</sequence>
<protein>
    <recommendedName>
        <fullName>Acidic endochitinase WIN6.2B</fullName>
        <ecNumber>3.2.1.14</ecNumber>
    </recommendedName>
</protein>
<feature type="signal peptide" evidence="1">
    <location>
        <begin position="1"/>
        <end position="21"/>
    </location>
</feature>
<feature type="chain" id="PRO_0000005317" description="Acidic endochitinase WIN6.2B">
    <location>
        <begin position="22"/>
        <end position="303"/>
    </location>
</feature>
<feature type="domain" description="Chitin-binding type-1" evidence="3">
    <location>
        <begin position="22"/>
        <end position="62"/>
    </location>
</feature>
<feature type="region of interest" description="Chitinase">
    <location>
        <begin position="82"/>
        <end position="303"/>
    </location>
</feature>
<feature type="active site" description="Proton donor" evidence="2">
    <location>
        <position position="150"/>
    </location>
</feature>
<feature type="disulfide bond" evidence="3">
    <location>
        <begin position="24"/>
        <end position="39"/>
    </location>
</feature>
<feature type="disulfide bond" evidence="3">
    <location>
        <begin position="33"/>
        <end position="45"/>
    </location>
</feature>
<feature type="disulfide bond" evidence="3">
    <location>
        <begin position="38"/>
        <end position="52"/>
    </location>
</feature>
<feature type="disulfide bond" evidence="3">
    <location>
        <begin position="56"/>
        <end position="60"/>
    </location>
</feature>
<feature type="disulfide bond" evidence="3">
    <location>
        <begin position="253"/>
        <end position="286"/>
    </location>
</feature>
<keyword id="KW-0119">Carbohydrate metabolism</keyword>
<keyword id="KW-0146">Chitin degradation</keyword>
<keyword id="KW-0147">Chitin-binding</keyword>
<keyword id="KW-1015">Disulfide bond</keyword>
<keyword id="KW-0326">Glycosidase</keyword>
<keyword id="KW-0378">Hydrolase</keyword>
<keyword id="KW-0611">Plant defense</keyword>
<keyword id="KW-0624">Polysaccharide degradation</keyword>
<keyword id="KW-1185">Reference proteome</keyword>
<keyword id="KW-0732">Signal</keyword>
<name>CHIB_POPTR</name>
<evidence type="ECO:0000250" key="1"/>
<evidence type="ECO:0000250" key="2">
    <source>
        <dbReference type="UniProtKB" id="P29022"/>
    </source>
</evidence>
<evidence type="ECO:0000255" key="3">
    <source>
        <dbReference type="PROSITE-ProRule" id="PRU00261"/>
    </source>
</evidence>
<evidence type="ECO:0000305" key="4"/>